<name>3CAR1_PICSI</name>
<feature type="transit peptide" description="Chloroplast" evidence="3">
    <location>
        <begin position="1"/>
        <end position="36"/>
    </location>
</feature>
<feature type="chain" id="PRO_0000418967" description="(+)-3-carene synthase 1, chloroplastic">
    <location>
        <begin position="37"/>
        <end position="627"/>
    </location>
</feature>
<feature type="short sequence motif" description="DDXXD motif" evidence="1">
    <location>
        <begin position="378"/>
        <end position="382"/>
    </location>
</feature>
<feature type="binding site" evidence="2">
    <location>
        <position position="378"/>
    </location>
    <ligand>
        <name>Mg(2+)</name>
        <dbReference type="ChEBI" id="CHEBI:18420"/>
        <label>1</label>
    </ligand>
</feature>
<feature type="binding site" evidence="2">
    <location>
        <position position="378"/>
    </location>
    <ligand>
        <name>Mg(2+)</name>
        <dbReference type="ChEBI" id="CHEBI:18420"/>
        <label>2</label>
    </ligand>
</feature>
<feature type="binding site" evidence="2">
    <location>
        <position position="382"/>
    </location>
    <ligand>
        <name>Mg(2+)</name>
        <dbReference type="ChEBI" id="CHEBI:18420"/>
        <label>1</label>
    </ligand>
</feature>
<feature type="binding site" evidence="2">
    <location>
        <position position="382"/>
    </location>
    <ligand>
        <name>Mg(2+)</name>
        <dbReference type="ChEBI" id="CHEBI:18420"/>
        <label>2</label>
    </ligand>
</feature>
<feature type="binding site" evidence="2">
    <location>
        <position position="530"/>
    </location>
    <ligand>
        <name>Mg(2+)</name>
        <dbReference type="ChEBI" id="CHEBI:18420"/>
        <label>3</label>
    </ligand>
</feature>
<feature type="sequence variant" description="In strain: cv. Q903; susceptibility to pathogens." evidence="4">
    <original>M</original>
    <variation>V</variation>
    <location>
        <position position="190"/>
    </location>
</feature>
<feature type="sequence variant" description="In strain: cv. Q903; susceptibility to pathogens." evidence="4">
    <original>V</original>
    <variation>E</variation>
    <location>
        <position position="473"/>
    </location>
</feature>
<feature type="sequence conflict" description="In Ref. 1; ADZ45511 and 3; ACN40883." evidence="8" ref="1 3">
    <original>S</original>
    <variation>F</variation>
    <location>
        <position position="22"/>
    </location>
</feature>
<feature type="sequence conflict" description="In Ref. 1; ADZ45511 and 3; ACN40883." evidence="8" ref="1 3">
    <original>P</original>
    <variation>T</variation>
    <location>
        <position position="577"/>
    </location>
</feature>
<organism>
    <name type="scientific">Picea sitchensis</name>
    <name type="common">Sitka spruce</name>
    <name type="synonym">Pinus sitchensis</name>
    <dbReference type="NCBI Taxonomy" id="3332"/>
    <lineage>
        <taxon>Eukaryota</taxon>
        <taxon>Viridiplantae</taxon>
        <taxon>Streptophyta</taxon>
        <taxon>Embryophyta</taxon>
        <taxon>Tracheophyta</taxon>
        <taxon>Spermatophyta</taxon>
        <taxon>Pinopsida</taxon>
        <taxon>Pinidae</taxon>
        <taxon>Conifers I</taxon>
        <taxon>Pinales</taxon>
        <taxon>Pinaceae</taxon>
        <taxon>Picea</taxon>
    </lineage>
</organism>
<keyword id="KW-0150">Chloroplast</keyword>
<keyword id="KW-0456">Lyase</keyword>
<keyword id="KW-0460">Magnesium</keyword>
<keyword id="KW-0464">Manganese</keyword>
<keyword id="KW-0479">Metal-binding</keyword>
<keyword id="KW-0934">Plastid</keyword>
<keyword id="KW-0809">Transit peptide</keyword>
<reference key="1">
    <citation type="journal article" date="2011" name="BMC Plant Biol.">
        <title>Transcriptome mining, functional characterization, and phylogeny of a large terpene synthase gene family in spruce (Picea spp.).</title>
        <authorList>
            <person name="Keeling C.I."/>
            <person name="Weisshaar S."/>
            <person name="Ralph S.G."/>
            <person name="Jancsik S."/>
            <person name="Hamberger B."/>
            <person name="Dullat H.K."/>
            <person name="Bohlmann J."/>
        </authorList>
    </citation>
    <scope>NUCLEOTIDE SEQUENCE [MRNA]</scope>
    <scope>GENE FAMILY</scope>
    <source>
        <strain>cv. FB3-425</strain>
    </source>
</reference>
<reference key="2">
    <citation type="journal article" date="2011" name="Plant J.">
        <title>An integrated genomic, proteomic and biochemical analysis of (+)-3-carene biosynthesis in Sitka spruce (Picea sitchensis) genotypes that are resistant or susceptible to white pine weevil.</title>
        <authorList>
            <person name="Hall D.E."/>
            <person name="Robert J.A."/>
            <person name="Keeling C.I."/>
            <person name="Domanski D."/>
            <person name="Quesada A.L."/>
            <person name="Jancsik S."/>
            <person name="Kuzyk M.A."/>
            <person name="Hamberger B."/>
            <person name="Borchers C.H."/>
            <person name="Bohlmann J."/>
        </authorList>
    </citation>
    <scope>NUCLEOTIDE SEQUENCE [MRNA]</scope>
    <scope>FUNCTION</scope>
    <scope>CATALYTIC ACTIVITY</scope>
    <scope>INDUCTION BY JASMONIC ACID</scope>
    <scope>BIOPHYSICOCHEMICAL PROPERTIES</scope>
    <scope>VARIANTS VAL-190 AND GLU-473</scope>
    <scope>PATHWAY</scope>
    <source>
        <strain>cv. H898</strain>
        <strain>cv. Q903</strain>
    </source>
</reference>
<reference key="3">
    <citation type="submission" date="2009-02" db="EMBL/GenBank/DDBJ databases">
        <title>Full length sequence-verified cDNA sequences from Sitka spruce (Picea sitchensis).</title>
        <authorList>
            <person name="Reid K.E."/>
            <person name="Liao N."/>
            <person name="Ralph S."/>
            <person name="Kolosova N."/>
            <person name="Oddy C."/>
            <person name="Moore R."/>
            <person name="Mayo M."/>
            <person name="Wagner S."/>
            <person name="King J."/>
            <person name="Yanchuk A."/>
            <person name="Holt R."/>
            <person name="Jones S."/>
            <person name="Marra M."/>
            <person name="Ritland C.E."/>
            <person name="Ritland K."/>
            <person name="Bohlmann J."/>
        </authorList>
    </citation>
    <scope>NUCLEOTIDE SEQUENCE [LARGE SCALE MRNA]</scope>
    <source>
        <strain>cv. FB3-425</strain>
        <tissue>Bark</tissue>
    </source>
</reference>
<comment type="function">
    <text evidence="4 5">Terpene synthase (TPS) involved in the biosynthesis of monoterpene natural products included in conifer oleoresin secretions and volatile emissions; these compounds contribute to biotic and abiotic stress defense against herbivores (e.g. insect attack by white pine weevil P.strobi) and pathogens (PubMed:21323772, PubMed:21385377). Catalyzes the conversion of (2E)-geranyl diphosphate (GPP) to (+)-car-3-ene (PubMed:21323772, PubMed:21385377).</text>
</comment>
<comment type="catalytic activity">
    <reaction evidence="4">
        <text>(2E)-geranyl diphosphate = (+)-car-3-ene + diphosphate</text>
        <dbReference type="Rhea" id="RHEA:32539"/>
        <dbReference type="ChEBI" id="CHEBI:7"/>
        <dbReference type="ChEBI" id="CHEBI:33019"/>
        <dbReference type="ChEBI" id="CHEBI:58057"/>
        <dbReference type="EC" id="4.2.3.107"/>
    </reaction>
</comment>
<comment type="cofactor">
    <cofactor evidence="1">
        <name>Mg(2+)</name>
        <dbReference type="ChEBI" id="CHEBI:18420"/>
    </cofactor>
    <cofactor evidence="1">
        <name>Mn(2+)</name>
        <dbReference type="ChEBI" id="CHEBI:29035"/>
    </cofactor>
    <text evidence="1">Binds 3 Mg(2+) or Mn(2+) ions per subunit.</text>
</comment>
<comment type="biophysicochemical properties">
    <kinetics>
        <KM evidence="4">6.88 uM for geranyl diphosphate</KM>
        <Vmax evidence="4">32.1 pmol/sec/ug enzyme with geranyl diphosphate as substrate</Vmax>
        <text evidence="4">kcat is 2.21 sec(-1) with geranyl diphosphate as substrate.</text>
    </kinetics>
</comment>
<comment type="pathway">
    <text evidence="4">Terpene metabolism; oleoresin biosynthesis.</text>
</comment>
<comment type="subcellular location">
    <subcellularLocation>
        <location evidence="8">Plastid</location>
        <location evidence="8">Chloroplast</location>
    </subcellularLocation>
</comment>
<comment type="induction">
    <text evidence="4">By jasmonic acid (MeJA).</text>
</comment>
<comment type="domain">
    <text evidence="1">The Asp-Asp-Xaa-Xaa-Asp/Glu (DDXXD/E) motif is important for the catalytic activity, presumably through binding to Mg(2+).</text>
</comment>
<comment type="miscellaneous">
    <text>Expressed in both resistant and susceptible trees.</text>
</comment>
<comment type="similarity">
    <text evidence="8">Belongs to the terpene synthase family. Tpsd subfamily.</text>
</comment>
<proteinExistence type="evidence at protein level"/>
<gene>
    <name evidence="6 7" type="primary">TPS-3car1</name>
</gene>
<sequence>MSVISIVPLASKPCLYKSFISSTHEPKALRRPISTVGLCRRAKSVTASMSMSSSTALSDDGVQRRIGNHHSNLWDDNFIQSLSSPYGASSYAERAERLIGEVKEIFNRISMANGELVSHVDDLLQHLSMVDNVERLGIDRHFQTEIKVSLDYVYSYWSEKGIGPGRDIVCADLNTTALGFRLLRLHGYTMFPDVFEQFKDQMGRIACSTNQTERQISSILNLFRASLIAFPWEKVMEEAEIFSTAYLKEALQTIPVSSLSREIQYVLDYRWHSDLPRLETRTYIDILRENATNETLDMKTEKLLELAKVEFNIFNSLQQNELKCVSRWWKESGSPDLTFIRHRQVEFYTLVSGIDMEPKRSTFRINFVKICHFVTILDDMYDTFGTIDELRLFTAAVKRWDKSATECLPEYMKGVYIDLYETVNELAREAYKSQGRDTLNYARQALEDYLGSYLKEAEWISTGYIPTFEEYLVNGKVSSAHRIATLQPILMLDVPFPPHVLQEIDFPSKFNDLAGSILRLRGDTRCYQNDRARGEEASCISCYMKDNPGSTEEDALNHINGMIEKQIKELNWELLKPDKNVPISSKKHAFNISRGLHHFYKYRDGYTVANSETRNLVIKTVLEPVPM</sequence>
<protein>
    <recommendedName>
        <fullName evidence="6 7">(+)-3-carene synthase 1, chloroplastic</fullName>
        <ecNumber evidence="4">4.2.3.107</ecNumber>
    </recommendedName>
    <alternativeName>
        <fullName evidence="6">(+)-car-3-ene synthase 1</fullName>
    </alternativeName>
    <alternativeName>
        <fullName evidence="6">3-carene cyclase 1</fullName>
    </alternativeName>
    <alternativeName>
        <fullName evidence="6 7">Terpene synthase TPS-3car1</fullName>
        <shortName evidence="6 7">PsTPS-3car1</shortName>
    </alternativeName>
</protein>
<evidence type="ECO:0000250" key="1">
    <source>
        <dbReference type="UniProtKB" id="A0A1C9J6A7"/>
    </source>
</evidence>
<evidence type="ECO:0000250" key="2">
    <source>
        <dbReference type="UniProtKB" id="Q40577"/>
    </source>
</evidence>
<evidence type="ECO:0000255" key="3"/>
<evidence type="ECO:0000269" key="4">
    <source>
    </source>
</evidence>
<evidence type="ECO:0000269" key="5">
    <source>
    </source>
</evidence>
<evidence type="ECO:0000303" key="6">
    <source>
    </source>
</evidence>
<evidence type="ECO:0000303" key="7">
    <source>
    </source>
</evidence>
<evidence type="ECO:0000305" key="8"/>
<dbReference type="EC" id="4.2.3.107" evidence="4"/>
<dbReference type="EMBL" id="HQ426167">
    <property type="protein sequence ID" value="ADZ45511.1"/>
    <property type="molecule type" value="mRNA"/>
</dbReference>
<dbReference type="EMBL" id="HQ336798">
    <property type="protein sequence ID" value="ADU85924.1"/>
    <property type="molecule type" value="mRNA"/>
</dbReference>
<dbReference type="EMBL" id="HQ336799">
    <property type="protein sequence ID" value="ADU85925.1"/>
    <property type="molecule type" value="mRNA"/>
</dbReference>
<dbReference type="EMBL" id="BT071423">
    <property type="protein sequence ID" value="ACN40883.1"/>
    <property type="molecule type" value="mRNA"/>
</dbReference>
<dbReference type="SMR" id="F1CKI6"/>
<dbReference type="KEGG" id="ag:ADU85924"/>
<dbReference type="BRENDA" id="4.2.3.107">
    <property type="organism ID" value="8974"/>
</dbReference>
<dbReference type="BRENDA" id="4.2.3.113">
    <property type="organism ID" value="8974"/>
</dbReference>
<dbReference type="SABIO-RK" id="F1CKI6"/>
<dbReference type="UniPathway" id="UPA00924"/>
<dbReference type="GO" id="GO:0009507">
    <property type="term" value="C:chloroplast"/>
    <property type="evidence" value="ECO:0007669"/>
    <property type="project" value="UniProtKB-SubCell"/>
</dbReference>
<dbReference type="GO" id="GO:0016829">
    <property type="term" value="F:lyase activity"/>
    <property type="evidence" value="ECO:0000314"/>
    <property type="project" value="UniProtKB"/>
</dbReference>
<dbReference type="GO" id="GO:0000287">
    <property type="term" value="F:magnesium ion binding"/>
    <property type="evidence" value="ECO:0007669"/>
    <property type="project" value="InterPro"/>
</dbReference>
<dbReference type="GO" id="GO:0010333">
    <property type="term" value="F:terpene synthase activity"/>
    <property type="evidence" value="ECO:0000314"/>
    <property type="project" value="UniProtKB"/>
</dbReference>
<dbReference type="GO" id="GO:0016102">
    <property type="term" value="P:diterpenoid biosynthetic process"/>
    <property type="evidence" value="ECO:0007669"/>
    <property type="project" value="InterPro"/>
</dbReference>
<dbReference type="GO" id="GO:0010597">
    <property type="term" value="P:green leaf volatile biosynthetic process"/>
    <property type="evidence" value="ECO:0000314"/>
    <property type="project" value="UniProtKB"/>
</dbReference>
<dbReference type="GO" id="GO:0043693">
    <property type="term" value="P:monoterpene biosynthetic process"/>
    <property type="evidence" value="ECO:0000314"/>
    <property type="project" value="UniProtKB"/>
</dbReference>
<dbReference type="GO" id="GO:0016099">
    <property type="term" value="P:monoterpenoid biosynthetic process"/>
    <property type="evidence" value="ECO:0000314"/>
    <property type="project" value="UniProtKB"/>
</dbReference>
<dbReference type="GO" id="GO:0009753">
    <property type="term" value="P:response to jasmonic acid"/>
    <property type="evidence" value="ECO:0000270"/>
    <property type="project" value="UniProtKB"/>
</dbReference>
<dbReference type="CDD" id="cd00684">
    <property type="entry name" value="Terpene_cyclase_plant_C1"/>
    <property type="match status" value="1"/>
</dbReference>
<dbReference type="FunFam" id="1.50.10.130:FF:000004">
    <property type="entry name" value="Carene synthase, chloroplastic"/>
    <property type="match status" value="1"/>
</dbReference>
<dbReference type="FunFam" id="1.10.600.10:FF:000005">
    <property type="entry name" value="Ent-kaur-16-ene synthase, chloroplastic"/>
    <property type="match status" value="1"/>
</dbReference>
<dbReference type="Gene3D" id="1.10.600.10">
    <property type="entry name" value="Farnesyl Diphosphate Synthase"/>
    <property type="match status" value="1"/>
</dbReference>
<dbReference type="Gene3D" id="1.50.10.130">
    <property type="entry name" value="Terpene synthase, N-terminal domain"/>
    <property type="match status" value="1"/>
</dbReference>
<dbReference type="InterPro" id="IPR008949">
    <property type="entry name" value="Isoprenoid_synthase_dom_sf"/>
</dbReference>
<dbReference type="InterPro" id="IPR034741">
    <property type="entry name" value="Terpene_cyclase-like_1_C"/>
</dbReference>
<dbReference type="InterPro" id="IPR044814">
    <property type="entry name" value="Terpene_cyclase_plant_C1"/>
</dbReference>
<dbReference type="InterPro" id="IPR001906">
    <property type="entry name" value="Terpene_synth_N"/>
</dbReference>
<dbReference type="InterPro" id="IPR036965">
    <property type="entry name" value="Terpene_synth_N_sf"/>
</dbReference>
<dbReference type="InterPro" id="IPR050148">
    <property type="entry name" value="Terpene_synthase-like"/>
</dbReference>
<dbReference type="InterPro" id="IPR005630">
    <property type="entry name" value="Terpene_synthase_metal-bd"/>
</dbReference>
<dbReference type="InterPro" id="IPR008930">
    <property type="entry name" value="Terpenoid_cyclase/PrenylTrfase"/>
</dbReference>
<dbReference type="PANTHER" id="PTHR31225">
    <property type="entry name" value="OS04G0344100 PROTEIN-RELATED"/>
    <property type="match status" value="1"/>
</dbReference>
<dbReference type="Pfam" id="PF01397">
    <property type="entry name" value="Terpene_synth"/>
    <property type="match status" value="1"/>
</dbReference>
<dbReference type="Pfam" id="PF03936">
    <property type="entry name" value="Terpene_synth_C"/>
    <property type="match status" value="1"/>
</dbReference>
<dbReference type="SFLD" id="SFLDS00005">
    <property type="entry name" value="Isoprenoid_Synthase_Type_I"/>
    <property type="match status" value="1"/>
</dbReference>
<dbReference type="SFLD" id="SFLDG01019">
    <property type="entry name" value="Terpene_Cyclase_Like_1_C_Termi"/>
    <property type="match status" value="1"/>
</dbReference>
<dbReference type="SFLD" id="SFLDG01014">
    <property type="entry name" value="Terpene_Cyclase_Like_1_N-term"/>
    <property type="match status" value="1"/>
</dbReference>
<dbReference type="SUPFAM" id="SSF48239">
    <property type="entry name" value="Terpenoid cyclases/Protein prenyltransferases"/>
    <property type="match status" value="1"/>
</dbReference>
<dbReference type="SUPFAM" id="SSF48576">
    <property type="entry name" value="Terpenoid synthases"/>
    <property type="match status" value="1"/>
</dbReference>
<accession>F1CKI6</accession>
<accession>C0PSU3</accession>
<accession>F1CKI7</accession>